<proteinExistence type="inferred from homology"/>
<reference key="1">
    <citation type="journal article" date="2009" name="ISME J.">
        <title>The genome sequence of the psychrophilic archaeon, Methanococcoides burtonii: the role of genome evolution in cold adaptation.</title>
        <authorList>
            <person name="Allen M.A."/>
            <person name="Lauro F.M."/>
            <person name="Williams T.J."/>
            <person name="Burg D."/>
            <person name="Siddiqui K.S."/>
            <person name="De Francisci D."/>
            <person name="Chong K.W."/>
            <person name="Pilak O."/>
            <person name="Chew H.H."/>
            <person name="De Maere M.Z."/>
            <person name="Ting L."/>
            <person name="Katrib M."/>
            <person name="Ng C."/>
            <person name="Sowers K.R."/>
            <person name="Galperin M.Y."/>
            <person name="Anderson I.J."/>
            <person name="Ivanova N."/>
            <person name="Dalin E."/>
            <person name="Martinez M."/>
            <person name="Lapidus A."/>
            <person name="Hauser L."/>
            <person name="Land M."/>
            <person name="Thomas T."/>
            <person name="Cavicchioli R."/>
        </authorList>
    </citation>
    <scope>NUCLEOTIDE SEQUENCE [LARGE SCALE GENOMIC DNA]</scope>
    <source>
        <strain>DSM 6242 / NBRC 107633 / OCM 468 / ACE-M</strain>
    </source>
</reference>
<gene>
    <name evidence="1" type="primary">rpl18</name>
    <name type="ordered locus">Mbur_0020</name>
</gene>
<sequence>MATGPRYKVAFRRRREGRTDYHQRLRLLLSREDRVVVRKSARHMQIQLVAPDANGDVTLSSAISKELAKYGYEGSTGNTTAAYLTGLLFGYKTLAEGYESGVLDIGIQASSAGSRVYAALKGVVDSGLDVPHNSSVFPSDERIRGEHVAEYMEGSNLPEVFDAVKEKILAEFS</sequence>
<protein>
    <recommendedName>
        <fullName evidence="1">Large ribosomal subunit protein uL18</fullName>
    </recommendedName>
    <alternativeName>
        <fullName evidence="2">50S ribosomal protein L18</fullName>
    </alternativeName>
</protein>
<dbReference type="EMBL" id="CP000300">
    <property type="protein sequence ID" value="ABE51044.1"/>
    <property type="molecule type" value="Genomic_DNA"/>
</dbReference>
<dbReference type="RefSeq" id="WP_011498208.1">
    <property type="nucleotide sequence ID" value="NC_007955.1"/>
</dbReference>
<dbReference type="SMR" id="Q12ZT2"/>
<dbReference type="STRING" id="259564.Mbur_0020"/>
<dbReference type="GeneID" id="3996920"/>
<dbReference type="KEGG" id="mbu:Mbur_0020"/>
<dbReference type="HOGENOM" id="CLU_056222_2_0_2"/>
<dbReference type="OrthoDB" id="8644at2157"/>
<dbReference type="Proteomes" id="UP000001979">
    <property type="component" value="Chromosome"/>
</dbReference>
<dbReference type="GO" id="GO:0022625">
    <property type="term" value="C:cytosolic large ribosomal subunit"/>
    <property type="evidence" value="ECO:0007669"/>
    <property type="project" value="TreeGrafter"/>
</dbReference>
<dbReference type="GO" id="GO:0008097">
    <property type="term" value="F:5S rRNA binding"/>
    <property type="evidence" value="ECO:0007669"/>
    <property type="project" value="InterPro"/>
</dbReference>
<dbReference type="GO" id="GO:0003735">
    <property type="term" value="F:structural constituent of ribosome"/>
    <property type="evidence" value="ECO:0007669"/>
    <property type="project" value="InterPro"/>
</dbReference>
<dbReference type="GO" id="GO:0000027">
    <property type="term" value="P:ribosomal large subunit assembly"/>
    <property type="evidence" value="ECO:0007669"/>
    <property type="project" value="TreeGrafter"/>
</dbReference>
<dbReference type="GO" id="GO:0006412">
    <property type="term" value="P:translation"/>
    <property type="evidence" value="ECO:0007669"/>
    <property type="project" value="UniProtKB-UniRule"/>
</dbReference>
<dbReference type="CDD" id="cd00432">
    <property type="entry name" value="Ribosomal_L18_L5e"/>
    <property type="match status" value="1"/>
</dbReference>
<dbReference type="Gene3D" id="3.30.420.100">
    <property type="match status" value="1"/>
</dbReference>
<dbReference type="HAMAP" id="MF_01337_A">
    <property type="entry name" value="Ribosomal_uL18_A"/>
    <property type="match status" value="1"/>
</dbReference>
<dbReference type="InterPro" id="IPR005485">
    <property type="entry name" value="Rbsml_uL18_euk"/>
</dbReference>
<dbReference type="NCBIfam" id="NF006342">
    <property type="entry name" value="PRK08569.1"/>
    <property type="match status" value="1"/>
</dbReference>
<dbReference type="PANTHER" id="PTHR23410:SF12">
    <property type="entry name" value="LARGE RIBOSOMAL SUBUNIT PROTEIN UL18"/>
    <property type="match status" value="1"/>
</dbReference>
<dbReference type="PANTHER" id="PTHR23410">
    <property type="entry name" value="RIBOSOMAL PROTEIN L5-RELATED"/>
    <property type="match status" value="1"/>
</dbReference>
<dbReference type="Pfam" id="PF17144">
    <property type="entry name" value="Ribosomal_L5e"/>
    <property type="match status" value="2"/>
</dbReference>
<dbReference type="PRINTS" id="PR00058">
    <property type="entry name" value="RIBOSOMALL5"/>
</dbReference>
<dbReference type="SUPFAM" id="SSF53137">
    <property type="entry name" value="Translational machinery components"/>
    <property type="match status" value="1"/>
</dbReference>
<organism>
    <name type="scientific">Methanococcoides burtonii (strain DSM 6242 / NBRC 107633 / OCM 468 / ACE-M)</name>
    <dbReference type="NCBI Taxonomy" id="259564"/>
    <lineage>
        <taxon>Archaea</taxon>
        <taxon>Methanobacteriati</taxon>
        <taxon>Methanobacteriota</taxon>
        <taxon>Stenosarchaea group</taxon>
        <taxon>Methanomicrobia</taxon>
        <taxon>Methanosarcinales</taxon>
        <taxon>Methanosarcinaceae</taxon>
        <taxon>Methanococcoides</taxon>
    </lineage>
</organism>
<evidence type="ECO:0000255" key="1">
    <source>
        <dbReference type="HAMAP-Rule" id="MF_01337"/>
    </source>
</evidence>
<evidence type="ECO:0000305" key="2"/>
<feature type="chain" id="PRO_1000053055" description="Large ribosomal subunit protein uL18">
    <location>
        <begin position="1"/>
        <end position="173"/>
    </location>
</feature>
<keyword id="KW-0687">Ribonucleoprotein</keyword>
<keyword id="KW-0689">Ribosomal protein</keyword>
<keyword id="KW-0694">RNA-binding</keyword>
<keyword id="KW-0699">rRNA-binding</keyword>
<accession>Q12ZT2</accession>
<comment type="function">
    <text evidence="1">This is one of the proteins that bind and probably mediate the attachment of the 5S RNA into the large ribosomal subunit, where it forms part of the central protuberance.</text>
</comment>
<comment type="subunit">
    <text evidence="1">Part of the 50S ribosomal subunit. Contacts the 5S and 23S rRNAs.</text>
</comment>
<comment type="similarity">
    <text evidence="1">Belongs to the universal ribosomal protein uL18 family.</text>
</comment>
<name>RL18_METBU</name>